<gene>
    <name evidence="2" type="primary">UBA4</name>
    <name type="ORF">Kpol_1031p21</name>
</gene>
<protein>
    <recommendedName>
        <fullName evidence="2">Adenylyltransferase and sulfurtransferase UBA4</fullName>
    </recommendedName>
    <alternativeName>
        <fullName evidence="2">Ubiquitin-like protein activator 4</fullName>
    </alternativeName>
    <domain>
        <recommendedName>
            <fullName evidence="2">Adenylyltransferase UBA4</fullName>
            <ecNumber evidence="2">2.7.7.-</ecNumber>
        </recommendedName>
    </domain>
    <domain>
        <recommendedName>
            <fullName evidence="2">Sulfurtransferase UBA4</fullName>
            <ecNumber evidence="2">2.8.1.-</ecNumber>
        </recommendedName>
    </domain>
</protein>
<dbReference type="EC" id="2.7.7.-" evidence="2"/>
<dbReference type="EC" id="2.8.1.-" evidence="2"/>
<dbReference type="EMBL" id="DS480393">
    <property type="protein sequence ID" value="EDO18117.1"/>
    <property type="molecule type" value="Genomic_DNA"/>
</dbReference>
<dbReference type="RefSeq" id="XP_001645975.1">
    <property type="nucleotide sequence ID" value="XM_001645925.1"/>
</dbReference>
<dbReference type="SMR" id="A7THV5"/>
<dbReference type="FunCoup" id="A7THV5">
    <property type="interactions" value="888"/>
</dbReference>
<dbReference type="STRING" id="436907.A7THV5"/>
<dbReference type="GeneID" id="5546387"/>
<dbReference type="KEGG" id="vpo:Kpol_1031p21"/>
<dbReference type="eggNOG" id="KOG2017">
    <property type="taxonomic scope" value="Eukaryota"/>
</dbReference>
<dbReference type="HOGENOM" id="CLU_013325_1_2_1"/>
<dbReference type="InParanoid" id="A7THV5"/>
<dbReference type="OMA" id="IPDVGMD"/>
<dbReference type="OrthoDB" id="10261062at2759"/>
<dbReference type="PhylomeDB" id="A7THV5"/>
<dbReference type="UniPathway" id="UPA00988"/>
<dbReference type="Proteomes" id="UP000000267">
    <property type="component" value="Unassembled WGS sequence"/>
</dbReference>
<dbReference type="GO" id="GO:0005829">
    <property type="term" value="C:cytosol"/>
    <property type="evidence" value="ECO:0007669"/>
    <property type="project" value="InterPro"/>
</dbReference>
<dbReference type="GO" id="GO:0070733">
    <property type="term" value="F:AMPylase activity"/>
    <property type="evidence" value="ECO:0007669"/>
    <property type="project" value="EnsemblFungi"/>
</dbReference>
<dbReference type="GO" id="GO:0005524">
    <property type="term" value="F:ATP binding"/>
    <property type="evidence" value="ECO:0007669"/>
    <property type="project" value="UniProtKB-KW"/>
</dbReference>
<dbReference type="GO" id="GO:0042802">
    <property type="term" value="F:identical protein binding"/>
    <property type="evidence" value="ECO:0007669"/>
    <property type="project" value="EnsemblFungi"/>
</dbReference>
<dbReference type="GO" id="GO:0046872">
    <property type="term" value="F:metal ion binding"/>
    <property type="evidence" value="ECO:0007669"/>
    <property type="project" value="UniProtKB-KW"/>
</dbReference>
<dbReference type="GO" id="GO:0004792">
    <property type="term" value="F:thiosulfate-cyanide sulfurtransferase activity"/>
    <property type="evidence" value="ECO:0007669"/>
    <property type="project" value="EnsemblFungi"/>
</dbReference>
<dbReference type="GO" id="GO:0042292">
    <property type="term" value="F:URM1 activating enzyme activity"/>
    <property type="evidence" value="ECO:0007669"/>
    <property type="project" value="EnsemblFungi"/>
</dbReference>
<dbReference type="GO" id="GO:0007114">
    <property type="term" value="P:cell budding"/>
    <property type="evidence" value="ECO:0007669"/>
    <property type="project" value="EnsemblFungi"/>
</dbReference>
<dbReference type="GO" id="GO:0034599">
    <property type="term" value="P:cellular response to oxidative stress"/>
    <property type="evidence" value="ECO:0007669"/>
    <property type="project" value="EnsemblFungi"/>
</dbReference>
<dbReference type="GO" id="GO:0001403">
    <property type="term" value="P:invasive growth in response to glucose limitation"/>
    <property type="evidence" value="ECO:0007669"/>
    <property type="project" value="EnsemblFungi"/>
</dbReference>
<dbReference type="GO" id="GO:0032447">
    <property type="term" value="P:protein urmylation"/>
    <property type="evidence" value="ECO:0007669"/>
    <property type="project" value="UniProtKB-UniRule"/>
</dbReference>
<dbReference type="GO" id="GO:2000220">
    <property type="term" value="P:regulation of pseudohyphal growth"/>
    <property type="evidence" value="ECO:0007669"/>
    <property type="project" value="EnsemblFungi"/>
</dbReference>
<dbReference type="GO" id="GO:0002143">
    <property type="term" value="P:tRNA wobble position uridine thiolation"/>
    <property type="evidence" value="ECO:0007669"/>
    <property type="project" value="EnsemblFungi"/>
</dbReference>
<dbReference type="CDD" id="cd00757">
    <property type="entry name" value="ThiF_MoeB_HesA_family"/>
    <property type="match status" value="1"/>
</dbReference>
<dbReference type="FunFam" id="3.40.250.10:FF:000014">
    <property type="entry name" value="Adenylyltransferase and sulfurtransferase MOCS3"/>
    <property type="match status" value="1"/>
</dbReference>
<dbReference type="FunFam" id="3.40.50.720:FF:000033">
    <property type="entry name" value="Adenylyltransferase and sulfurtransferase MOCS3"/>
    <property type="match status" value="1"/>
</dbReference>
<dbReference type="Gene3D" id="3.40.50.720">
    <property type="entry name" value="NAD(P)-binding Rossmann-like Domain"/>
    <property type="match status" value="1"/>
</dbReference>
<dbReference type="Gene3D" id="3.40.250.10">
    <property type="entry name" value="Rhodanese-like domain"/>
    <property type="match status" value="1"/>
</dbReference>
<dbReference type="HAMAP" id="MF_03049">
    <property type="entry name" value="MOCS3_Uba4"/>
    <property type="match status" value="1"/>
</dbReference>
<dbReference type="InterPro" id="IPR028885">
    <property type="entry name" value="MOCS3/Uba4"/>
</dbReference>
<dbReference type="InterPro" id="IPR001763">
    <property type="entry name" value="Rhodanese-like_dom"/>
</dbReference>
<dbReference type="InterPro" id="IPR036873">
    <property type="entry name" value="Rhodanese-like_dom_sf"/>
</dbReference>
<dbReference type="InterPro" id="IPR045886">
    <property type="entry name" value="ThiF/MoeB/HesA"/>
</dbReference>
<dbReference type="InterPro" id="IPR000594">
    <property type="entry name" value="ThiF_NAD_FAD-bd"/>
</dbReference>
<dbReference type="InterPro" id="IPR035985">
    <property type="entry name" value="Ubiquitin-activating_enz"/>
</dbReference>
<dbReference type="PANTHER" id="PTHR10953:SF102">
    <property type="entry name" value="ADENYLYLTRANSFERASE AND SULFURTRANSFERASE MOCS3"/>
    <property type="match status" value="1"/>
</dbReference>
<dbReference type="PANTHER" id="PTHR10953">
    <property type="entry name" value="UBIQUITIN-ACTIVATING ENZYME E1"/>
    <property type="match status" value="1"/>
</dbReference>
<dbReference type="Pfam" id="PF00581">
    <property type="entry name" value="Rhodanese"/>
    <property type="match status" value="1"/>
</dbReference>
<dbReference type="Pfam" id="PF00899">
    <property type="entry name" value="ThiF"/>
    <property type="match status" value="1"/>
</dbReference>
<dbReference type="SMART" id="SM00450">
    <property type="entry name" value="RHOD"/>
    <property type="match status" value="1"/>
</dbReference>
<dbReference type="SUPFAM" id="SSF69572">
    <property type="entry name" value="Activating enzymes of the ubiquitin-like proteins"/>
    <property type="match status" value="1"/>
</dbReference>
<dbReference type="PROSITE" id="PS50206">
    <property type="entry name" value="RHODANESE_3"/>
    <property type="match status" value="1"/>
</dbReference>
<accession>A7THV5</accession>
<sequence>MVEVSAEVLAELELLKKENAKLRSQLDSQKSDKLPMSLQEFQRYGRQMIVEETSGIEGQLKLKNSKVLVIGAGGLGCPALLYLAGAGIGTIGIVDNDTVDNSNLHRQVLHDSSKVGMLKCESARQRINLLNPHVNVKTYPVRLDYSNAFTIFENYDYVLDCTDTPITRYLVSDVAVNLGMTVISASGLGSEGQLSILNFKNEGPCYRCFYPTPPPPNSVSSCQEGGVIGPCIGLVGTMMAVETLKVIYDIYTLENFKPFLMMYSGFPNQTLRTFKMRGRQNNCECCGLDPKITRAAIESGLVNYFEFCGSRNYNLCTDEERISSEIYKTEFIDCNEKDHILIDVRPRHHFNISHFNHAINIPVKELKGMKGSLDILKESVPNVSQDSKVIVLCRYGNDSQIATRLLKDEFKINDVKDVKGGFFKYIDEEDHSYPKY</sequence>
<comment type="function">
    <text evidence="2">Plays a central role in 2-thiolation of mcm(5)S(2)U at tRNA wobble positions of cytosolic tRNA(Lys), tRNA(Glu) and tRNA(Gln). Acts by mediating the C-terminal thiocarboxylation of sulfur carrier URM1. Its N-terminus first activates URM1 as acyl-adenylate (-COAMP), then the persulfide sulfur on the catalytic cysteine is transferred to URM1 to form thiocarboxylation (-COSH) of its C-terminus. The reaction probably involves hydrogen sulfide that is generated from the persulfide intermediate and that acts as a nucleophile towards URM1. Subsequently, a transient disulfide bond is formed. Does not use thiosulfate as sulfur donor; NFS1 probably acting as a sulfur donor for thiocarboxylation reactions. Prior mcm(5) tRNA modification by the elongator complex is required for 2-thiolation. May also be involved in protein urmylation.</text>
</comment>
<comment type="cofactor">
    <cofactor evidence="2">
        <name>Zn(2+)</name>
        <dbReference type="ChEBI" id="CHEBI:29105"/>
    </cofactor>
    <text evidence="2">Binds 1 zinc ion per subunit.</text>
</comment>
<comment type="pathway">
    <text evidence="2">tRNA modification; 5-methoxycarbonylmethyl-2-thiouridine-tRNA biosynthesis.</text>
</comment>
<comment type="subcellular location">
    <subcellularLocation>
        <location evidence="1">Cytoplasm</location>
        <location evidence="1">Cytosol</location>
    </subcellularLocation>
</comment>
<comment type="similarity">
    <text evidence="2">In the N-terminal section; belongs to the HesA/MoeB/ThiF family. UBA4 subfamily.</text>
</comment>
<feature type="chain" id="PRO_0000369234" description="Adenylyltransferase and sulfurtransferase UBA4">
    <location>
        <begin position="1"/>
        <end position="436"/>
    </location>
</feature>
<feature type="domain" description="Rhodanese" evidence="2">
    <location>
        <begin position="335"/>
        <end position="434"/>
    </location>
</feature>
<feature type="active site" description="Glycyl thioester intermediate; for adenylyltransferase activity" evidence="2">
    <location>
        <position position="222"/>
    </location>
</feature>
<feature type="active site" description="Cysteine persulfide intermediate; for sulfurtransferase activity" evidence="2">
    <location>
        <position position="393"/>
    </location>
</feature>
<feature type="binding site" evidence="2">
    <location>
        <position position="74"/>
    </location>
    <ligand>
        <name>ATP</name>
        <dbReference type="ChEBI" id="CHEBI:30616"/>
    </ligand>
</feature>
<feature type="binding site" evidence="2">
    <location>
        <position position="95"/>
    </location>
    <ligand>
        <name>ATP</name>
        <dbReference type="ChEBI" id="CHEBI:30616"/>
    </ligand>
</feature>
<feature type="binding site" evidence="2">
    <location>
        <begin position="102"/>
        <end position="106"/>
    </location>
    <ligand>
        <name>ATP</name>
        <dbReference type="ChEBI" id="CHEBI:30616"/>
    </ligand>
</feature>
<feature type="binding site" evidence="2">
    <location>
        <position position="119"/>
    </location>
    <ligand>
        <name>ATP</name>
        <dbReference type="ChEBI" id="CHEBI:30616"/>
    </ligand>
</feature>
<feature type="binding site" evidence="2">
    <location>
        <begin position="163"/>
        <end position="164"/>
    </location>
    <ligand>
        <name>ATP</name>
        <dbReference type="ChEBI" id="CHEBI:30616"/>
    </ligand>
</feature>
<feature type="binding site" evidence="2">
    <location>
        <position position="205"/>
    </location>
    <ligand>
        <name>Zn(2+)</name>
        <dbReference type="ChEBI" id="CHEBI:29105"/>
    </ligand>
</feature>
<feature type="binding site" evidence="2">
    <location>
        <position position="208"/>
    </location>
    <ligand>
        <name>Zn(2+)</name>
        <dbReference type="ChEBI" id="CHEBI:29105"/>
    </ligand>
</feature>
<feature type="binding site" evidence="2">
    <location>
        <position position="283"/>
    </location>
    <ligand>
        <name>Zn(2+)</name>
        <dbReference type="ChEBI" id="CHEBI:29105"/>
    </ligand>
</feature>
<feature type="binding site" evidence="2">
    <location>
        <position position="286"/>
    </location>
    <ligand>
        <name>Zn(2+)</name>
        <dbReference type="ChEBI" id="CHEBI:29105"/>
    </ligand>
</feature>
<reference key="1">
    <citation type="journal article" date="2007" name="Proc. Natl. Acad. Sci. U.S.A.">
        <title>Independent sorting-out of thousands of duplicated gene pairs in two yeast species descended from a whole-genome duplication.</title>
        <authorList>
            <person name="Scannell D.R."/>
            <person name="Frank A.C."/>
            <person name="Conant G.C."/>
            <person name="Byrne K.P."/>
            <person name="Woolfit M."/>
            <person name="Wolfe K.H."/>
        </authorList>
    </citation>
    <scope>NUCLEOTIDE SEQUENCE [LARGE SCALE GENOMIC DNA]</scope>
    <source>
        <strain>ATCC 22028 / DSM 70294 / BCRC 21397 / CBS 2163 / NBRC 10782 / NRRL Y-8283 / UCD 57-17</strain>
    </source>
</reference>
<evidence type="ECO:0000250" key="1">
    <source>
        <dbReference type="UniProtKB" id="P38820"/>
    </source>
</evidence>
<evidence type="ECO:0000255" key="2">
    <source>
        <dbReference type="HAMAP-Rule" id="MF_03049"/>
    </source>
</evidence>
<name>UBA4_VANPO</name>
<organism>
    <name type="scientific">Vanderwaltozyma polyspora (strain ATCC 22028 / DSM 70294 / BCRC 21397 / CBS 2163 / NBRC 10782 / NRRL Y-8283 / UCD 57-17)</name>
    <name type="common">Kluyveromyces polysporus</name>
    <dbReference type="NCBI Taxonomy" id="436907"/>
    <lineage>
        <taxon>Eukaryota</taxon>
        <taxon>Fungi</taxon>
        <taxon>Dikarya</taxon>
        <taxon>Ascomycota</taxon>
        <taxon>Saccharomycotina</taxon>
        <taxon>Saccharomycetes</taxon>
        <taxon>Saccharomycetales</taxon>
        <taxon>Saccharomycetaceae</taxon>
        <taxon>Vanderwaltozyma</taxon>
    </lineage>
</organism>
<proteinExistence type="inferred from homology"/>
<keyword id="KW-0067">ATP-binding</keyword>
<keyword id="KW-0963">Cytoplasm</keyword>
<keyword id="KW-0479">Metal-binding</keyword>
<keyword id="KW-0511">Multifunctional enzyme</keyword>
<keyword id="KW-0547">Nucleotide-binding</keyword>
<keyword id="KW-0548">Nucleotidyltransferase</keyword>
<keyword id="KW-1185">Reference proteome</keyword>
<keyword id="KW-0808">Transferase</keyword>
<keyword id="KW-0819">tRNA processing</keyword>
<keyword id="KW-0833">Ubl conjugation pathway</keyword>
<keyword id="KW-0862">Zinc</keyword>